<keyword id="KW-0002">3D-structure</keyword>
<keyword id="KW-0014">AIDS</keyword>
<keyword id="KW-0053">Apoptosis</keyword>
<keyword id="KW-0244">Early protein</keyword>
<keyword id="KW-1032">Host cell membrane</keyword>
<keyword id="KW-1035">Host cytoplasm</keyword>
<keyword id="KW-1043">Host membrane</keyword>
<keyword id="KW-0945">Host-virus interaction</keyword>
<keyword id="KW-0449">Lipoprotein</keyword>
<keyword id="KW-0472">Membrane</keyword>
<keyword id="KW-0519">Myristate</keyword>
<keyword id="KW-0597">Phosphoprotein</keyword>
<keyword id="KW-0964">Secreted</keyword>
<keyword id="KW-0729">SH3-binding</keyword>
<keyword id="KW-0899">Viral immunoevasion</keyword>
<keyword id="KW-0946">Virion</keyword>
<keyword id="KW-0843">Virulence</keyword>
<proteinExistence type="evidence at protein level"/>
<dbReference type="EMBL" id="M22639">
    <property type="protein sequence ID" value="AAA45371.1"/>
    <property type="molecule type" value="Genomic_RNA"/>
</dbReference>
<dbReference type="PIR" id="S54385">
    <property type="entry name" value="S54385"/>
</dbReference>
<dbReference type="PDB" id="5EO0">
    <property type="method" value="X-ray"/>
    <property type="resolution" value="1.70 A"/>
    <property type="chains" value="C=78-86"/>
</dbReference>
<dbReference type="PDB" id="5EO1">
    <property type="method" value="X-ray"/>
    <property type="resolution" value="1.85 A"/>
    <property type="chains" value="C=78-86"/>
</dbReference>
<dbReference type="PDBsum" id="5EO0"/>
<dbReference type="PDBsum" id="5EO1"/>
<dbReference type="SMR" id="P12478"/>
<dbReference type="EvolutionaryTrace" id="P12478"/>
<dbReference type="Proteomes" id="UP000155099">
    <property type="component" value="Genome"/>
</dbReference>
<dbReference type="GO" id="GO:0005576">
    <property type="term" value="C:extracellular region"/>
    <property type="evidence" value="ECO:0007669"/>
    <property type="project" value="UniProtKB-SubCell"/>
</dbReference>
<dbReference type="GO" id="GO:0044220">
    <property type="term" value="C:host cell perinuclear region of cytoplasm"/>
    <property type="evidence" value="ECO:0007669"/>
    <property type="project" value="UniProtKB-SubCell"/>
</dbReference>
<dbReference type="GO" id="GO:0020002">
    <property type="term" value="C:host cell plasma membrane"/>
    <property type="evidence" value="ECO:0007669"/>
    <property type="project" value="UniProtKB-SubCell"/>
</dbReference>
<dbReference type="GO" id="GO:0016020">
    <property type="term" value="C:membrane"/>
    <property type="evidence" value="ECO:0007669"/>
    <property type="project" value="UniProtKB-KW"/>
</dbReference>
<dbReference type="GO" id="GO:0044423">
    <property type="term" value="C:virion component"/>
    <property type="evidence" value="ECO:0007669"/>
    <property type="project" value="UniProtKB-KW"/>
</dbReference>
<dbReference type="GO" id="GO:0005525">
    <property type="term" value="F:GTP binding"/>
    <property type="evidence" value="ECO:0007669"/>
    <property type="project" value="InterPro"/>
</dbReference>
<dbReference type="GO" id="GO:0017124">
    <property type="term" value="F:SH3 domain binding"/>
    <property type="evidence" value="ECO:0007669"/>
    <property type="project" value="UniProtKB-KW"/>
</dbReference>
<dbReference type="Gene3D" id="4.10.890.10">
    <property type="entry name" value="HIV 1 nef anchor domain"/>
    <property type="match status" value="1"/>
</dbReference>
<dbReference type="Gene3D" id="3.30.62.10">
    <property type="entry name" value="Nef Regulatory Factor"/>
    <property type="match status" value="1"/>
</dbReference>
<dbReference type="InterPro" id="IPR027480">
    <property type="entry name" value="HIV-1_Nef_anchor_sf"/>
</dbReference>
<dbReference type="InterPro" id="IPR027481">
    <property type="entry name" value="HIV-1_Nef_core_sf"/>
</dbReference>
<dbReference type="InterPro" id="IPR001558">
    <property type="entry name" value="HIV_Nef"/>
</dbReference>
<dbReference type="Pfam" id="PF00469">
    <property type="entry name" value="F-protein"/>
    <property type="match status" value="1"/>
</dbReference>
<dbReference type="SUPFAM" id="SSF55671">
    <property type="entry name" value="Regulatory factor Nef"/>
    <property type="match status" value="1"/>
</dbReference>
<organismHost>
    <name type="scientific">Homo sapiens</name>
    <name type="common">Human</name>
    <dbReference type="NCBI Taxonomy" id="9606"/>
</organismHost>
<feature type="initiator methionine" description="Removed; by host" evidence="1">
    <location>
        <position position="1"/>
    </location>
</feature>
<feature type="chain" id="PRO_0000038329" description="Protein Nef">
    <location>
        <begin position="2"/>
        <end position="97" status="greater than"/>
    </location>
</feature>
<feature type="chain" id="PRO_0000038330" description="C-terminal core protein" evidence="1">
    <location>
        <begin position="58"/>
        <end position="97" status="greater than"/>
    </location>
</feature>
<feature type="region of interest" description="N-terminal; associates with the host plasma membrane" evidence="1">
    <location>
        <begin position="2"/>
        <end position="57"/>
    </location>
</feature>
<feature type="region of interest" description="Necessary for MHC-I internalization" evidence="1">
    <location>
        <begin position="7"/>
        <end position="26"/>
    </location>
</feature>
<feature type="region of interest" description="Acidic; stabilizes the interaction of NEF/MHC-I with host AP1M1; necessary for MHC-I internalization and interaction with host PACS1 and PACS2" evidence="1">
    <location>
        <begin position="62"/>
        <end position="66"/>
    </location>
</feature>
<feature type="region of interest" description="SH3-binding; interaction with Src family tyrosine kinases" evidence="1">
    <location>
        <begin position="70"/>
        <end position="79"/>
    </location>
</feature>
<feature type="short sequence motif" description="PxxP; stabilizes the interaction of NEF/MHC-I with host AP1M1; necessary for MHC-I internalization" evidence="1">
    <location>
        <begin position="73"/>
        <end position="76"/>
    </location>
</feature>
<feature type="site" description="Cleavage; by viral protease" evidence="1">
    <location>
        <begin position="57"/>
        <end position="58"/>
    </location>
</feature>
<feature type="lipid moiety-binding region" description="N-myristoyl glycine; by host" evidence="1">
    <location>
        <position position="2"/>
    </location>
</feature>
<feature type="non-terminal residue">
    <location>
        <position position="97"/>
    </location>
</feature>
<accession>P12478</accession>
<gene>
    <name type="primary">nef</name>
</gene>
<protein>
    <recommendedName>
        <fullName>Protein Nef</fullName>
    </recommendedName>
    <alternativeName>
        <fullName>3'ORF</fullName>
    </alternativeName>
    <alternativeName>
        <fullName>Negative factor</fullName>
        <shortName>F-protein</shortName>
    </alternativeName>
    <component>
        <recommendedName>
            <fullName>C-terminal core protein</fullName>
        </recommendedName>
    </component>
</protein>
<sequence length="97" mass="10592">MGGRWSKSSIVGWPAIRERIRRTDPAADGVGAVSRDLEKHGAITSSNTRGTNADCAWLEAQEESEEVGFPVRPQVPLRPMTYKGALDLSHFLKEKGG</sequence>
<reference key="1">
    <citation type="submission" date="1989-07" db="EMBL/GenBank/DDBJ databases">
        <authorList>
            <person name="Theodore T."/>
            <person name="Buckler-White A.J."/>
        </authorList>
    </citation>
    <scope>NUCLEOTIDE SEQUENCE [GENOMIC RNA]</scope>
</reference>
<organism>
    <name type="scientific">Human immunodeficiency virus type 1 group M subtype D (isolate Z2/CDC-Z34)</name>
    <name type="common">HIV-1</name>
    <dbReference type="NCBI Taxonomy" id="11683"/>
    <lineage>
        <taxon>Viruses</taxon>
        <taxon>Riboviria</taxon>
        <taxon>Pararnavirae</taxon>
        <taxon>Artverviricota</taxon>
        <taxon>Revtraviricetes</taxon>
        <taxon>Ortervirales</taxon>
        <taxon>Retroviridae</taxon>
        <taxon>Orthoretrovirinae</taxon>
        <taxon>Lentivirus</taxon>
        <taxon>Human immunodeficiency virus type 1</taxon>
    </lineage>
</organism>
<evidence type="ECO:0000250" key="1"/>
<evidence type="ECO:0000305" key="2"/>
<comment type="function">
    <text evidence="1">Factor of infectivity and pathogenicity, required for optimal virus replication. Alters numerous pathways of T-lymphocyte function and down-regulates immunity surface molecules in order to evade host defense and increase viral infectivity. Alters the functionality of other immunity cells, like dendritic cells, monocytes/macrophages and NK cells. One of the earliest and most abundantly expressed viral proteins (By similarity).</text>
</comment>
<comment type="function">
    <text evidence="1">In infected CD4(+) T-lymphocytes, down-regulates the surface MHC-I, mature MHC-II, CD4, CD28, CCR5 and CXCR4 molecules. Mediates internalization and degradation of host CD4 through the interaction of with the cytoplasmic tail of CD4, the recruitment of AP-2 (clathrin adapter protein complex 2), internalization through clathrin coated pits, and subsequent transport to endosomes and lysosomes for degradation. Diverts host MHC-I molecules to the trans-Golgi network-associated endosomal compartments by an endocytic pathway to finally target them for degradation. MHC-I down-regulation may involve AP-1 (clathrin adapter protein complex 1) or possibly Src family kinase-ZAP70/Syk-PI3K cascade recruited by PACS2. In consequence infected cells are masked for immune recognition by cytotoxic T-lymphocytes. Decreasing the number of immune receptors also prevents reinfection by more HIV particles (superinfection) (By similarity).</text>
</comment>
<comment type="function">
    <text evidence="1">Bypasses host T-cell signaling by inducing a transcriptional program nearly identical to that of anti-CD3 cell activation. Interaction with TCR-zeta chain up-regulates the Fas ligand (FasL). Increasing surface FasL molecules and decreasing surface MHC-I molecules on infected CD4(+) cells send attacking cytotoxic CD8+ T-lymphocytes into apoptosis (By similarity).</text>
</comment>
<comment type="function">
    <text evidence="1">Plays a role in optimizing the host cell environment for viral replication without causing cell death by apoptosis. Protects the infected cells from apoptosis in order to keep them alive until the next virus generation is ready to strike. Inhibits the Fas and TNFR-mediated death signals by blocking MAP3K5. Interacts and decreases the half-life of p53, protecting the infected cell against p53-mediated apoptosis. Inhibits the apoptotic signals regulated by the Bcl-2 family proteins through the formation of a Nef/PI3-kinase/PAK2 complex that leads to activation of PAK2 and induces phosphorylation of Bad (By similarity).</text>
</comment>
<comment type="function">
    <text evidence="1">Extracellular Nef protein targets CD4(+) T-lymphocytes for apoptosis by interacting with CXCR4 surface receptors.</text>
</comment>
<comment type="subunit">
    <text evidence="1">Homodimer (By similarity). Interacts with Nef associated p21-activated kinase (PAK2); this interaction activates PAK2. Associates with the Nef-MHC-I-AP1 complex; this complex is required for MHC-I internalization. Interacts (via C-terminus) with host PI3-kinase (via C-terminus). Interacts with host PACS1; this interaction seems to be weak. Interacts with host PACS2. Interacts with host LCK and MAPK3; these interactions inhibit the kinase activity of the latter. Interacts with host ATP6V1H; this interaction may play a role in CD4 endocytosis. Associates with the CD4-Nef-AP2 complex; this complex is required for CD4 internalization. Interacts with TCR-zeta chain; this interaction up-regulates the Fas ligand (FasL) surface expression. Interacts with various cellular proteins including MAP3K5, beta-COP, HCK, and PTE1. Interacts with human RACK1; this increases Nef phosphorylation by PKC (By similarity).</text>
</comment>
<comment type="subcellular location">
    <subcellularLocation>
        <location evidence="1">Host cell membrane</location>
        <topology evidence="1">Lipid-anchor</topology>
        <orientation evidence="1">Cytoplasmic side</orientation>
    </subcellularLocation>
    <subcellularLocation>
        <location evidence="1">Host cytoplasm</location>
        <location evidence="1">Host perinuclear region</location>
    </subcellularLocation>
    <subcellularLocation>
        <location evidence="1">Virion</location>
    </subcellularLocation>
    <subcellularLocation>
        <location evidence="1">Secreted</location>
    </subcellularLocation>
    <text evidence="1">Predominantly found in the paranuclear area, probably in the TGN. Correct localization requires PACS1. Also associates with the inner plasma membrane through its N-terminal domain. Nef stimulates its own export via the release of exosomes. Also incorporated in virions at a rate of about 10 molecules per virion, where it is cleaved (By similarity).</text>
</comment>
<comment type="domain">
    <text evidence="1">The N-terminal domain is composed of the N-myristoyl glycine and of a cluster of positively charged amino acids. It is required for inner plasma membrane targeting of Nef and virion incorporation, and thereby for infectivity. This domain is also involved in binding to p53 (By similarity).</text>
</comment>
<comment type="domain">
    <text evidence="1">The SH3-binding domain constituted of PxxP motifs mediates binding to several Src family proteins thereby regulating their tyrosine kinase activity. The same motifs also mediates the association with MAPK3, PI3-kinase and TCR-zeta (By similarity).</text>
</comment>
<comment type="domain">
    <text evidence="1">The di-leucine internalization motif and a diacidic motif seem to be required for binding to AP-2.</text>
</comment>
<comment type="domain">
    <text evidence="1">The acidic region may play a stabilizing role in the formation of a ternary complex between Nef, the MHC-I cytoplasmic domain, and AP1M1.</text>
</comment>
<comment type="PTM">
    <text evidence="1">The virion-associated Nef proteins are cleaved by the viral protease to release the soluble C-terminal core protein. Nef is probably cleaved concomitantly with viral structural proteins on maturation of virus particles (By similarity).</text>
</comment>
<comment type="PTM">
    <text>Phosphorylated on serine residues, probably by host PKC.</text>
</comment>
<comment type="miscellaneous">
    <text>HIV-1 lineages are divided in three main groups, M (for Major), O (for Outlier), and N (for New, or Non-M, Non-O). The vast majority of strains found worldwide belong to the group M. Group O seems to be endemic to and largely confined to Cameroon and neighboring countries in West Central Africa, where these viruses represent a small minority of HIV-1 strains. The group N is represented by a limited number of isolates from Cameroonian persons. The group M is further subdivided in 9 clades or subtypes (A to D, F to H, J and K).</text>
</comment>
<comment type="similarity">
    <text evidence="2">Belongs to the lentivirus primate group Nef protein family.</text>
</comment>
<name>NEF_HV1Z2</name>